<feature type="chain" id="PRO_0000143514" description="Maturase K">
    <location>
        <begin position="1"/>
        <end position="506"/>
    </location>
</feature>
<proteinExistence type="inferred from homology"/>
<dbReference type="EMBL" id="AF142738">
    <property type="protein sequence ID" value="AAD52909.1"/>
    <property type="molecule type" value="Genomic_DNA"/>
</dbReference>
<dbReference type="EMBL" id="AF522110">
    <property type="protein sequence ID" value="AAM82102.1"/>
    <property type="molecule type" value="Genomic_DNA"/>
</dbReference>
<dbReference type="RefSeq" id="YP_009572763.1">
    <property type="nucleotide sequence ID" value="NC_041419.1"/>
</dbReference>
<dbReference type="GeneID" id="39695198"/>
<dbReference type="GO" id="GO:0009507">
    <property type="term" value="C:chloroplast"/>
    <property type="evidence" value="ECO:0007669"/>
    <property type="project" value="UniProtKB-SubCell"/>
</dbReference>
<dbReference type="GO" id="GO:0003723">
    <property type="term" value="F:RNA binding"/>
    <property type="evidence" value="ECO:0007669"/>
    <property type="project" value="UniProtKB-KW"/>
</dbReference>
<dbReference type="GO" id="GO:0006397">
    <property type="term" value="P:mRNA processing"/>
    <property type="evidence" value="ECO:0007669"/>
    <property type="project" value="UniProtKB-KW"/>
</dbReference>
<dbReference type="GO" id="GO:0008380">
    <property type="term" value="P:RNA splicing"/>
    <property type="evidence" value="ECO:0007669"/>
    <property type="project" value="UniProtKB-UniRule"/>
</dbReference>
<dbReference type="GO" id="GO:0008033">
    <property type="term" value="P:tRNA processing"/>
    <property type="evidence" value="ECO:0007669"/>
    <property type="project" value="UniProtKB-KW"/>
</dbReference>
<dbReference type="HAMAP" id="MF_01390">
    <property type="entry name" value="MatK"/>
    <property type="match status" value="1"/>
</dbReference>
<dbReference type="InterPro" id="IPR024937">
    <property type="entry name" value="Domain_X"/>
</dbReference>
<dbReference type="InterPro" id="IPR002866">
    <property type="entry name" value="Maturase_MatK"/>
</dbReference>
<dbReference type="InterPro" id="IPR024942">
    <property type="entry name" value="Maturase_MatK_N"/>
</dbReference>
<dbReference type="PANTHER" id="PTHR34811">
    <property type="entry name" value="MATURASE K"/>
    <property type="match status" value="1"/>
</dbReference>
<dbReference type="PANTHER" id="PTHR34811:SF1">
    <property type="entry name" value="MATURASE K"/>
    <property type="match status" value="1"/>
</dbReference>
<dbReference type="Pfam" id="PF01348">
    <property type="entry name" value="Intron_maturas2"/>
    <property type="match status" value="1"/>
</dbReference>
<dbReference type="Pfam" id="PF01824">
    <property type="entry name" value="MatK_N"/>
    <property type="match status" value="1"/>
</dbReference>
<protein>
    <recommendedName>
        <fullName evidence="1">Maturase K</fullName>
    </recommendedName>
    <alternativeName>
        <fullName evidence="1">Intron maturase</fullName>
    </alternativeName>
</protein>
<gene>
    <name evidence="1" type="primary">matK</name>
</gene>
<keyword id="KW-0150">Chloroplast</keyword>
<keyword id="KW-0507">mRNA processing</keyword>
<keyword id="KW-0934">Plastid</keyword>
<keyword id="KW-0694">RNA-binding</keyword>
<keyword id="KW-0819">tRNA processing</keyword>
<name>MATK_MELAB</name>
<evidence type="ECO:0000255" key="1">
    <source>
        <dbReference type="HAMAP-Rule" id="MF_01390"/>
    </source>
</evidence>
<organism>
    <name type="scientific">Melilotus albus</name>
    <name type="common">White sweet clover</name>
    <name type="synonym">Melilotus officinalis subsp. albus</name>
    <dbReference type="NCBI Taxonomy" id="47082"/>
    <lineage>
        <taxon>Eukaryota</taxon>
        <taxon>Viridiplantae</taxon>
        <taxon>Streptophyta</taxon>
        <taxon>Embryophyta</taxon>
        <taxon>Tracheophyta</taxon>
        <taxon>Spermatophyta</taxon>
        <taxon>Magnoliopsida</taxon>
        <taxon>eudicotyledons</taxon>
        <taxon>Gunneridae</taxon>
        <taxon>Pentapetalae</taxon>
        <taxon>rosids</taxon>
        <taxon>fabids</taxon>
        <taxon>Fabales</taxon>
        <taxon>Fabaceae</taxon>
        <taxon>Papilionoideae</taxon>
        <taxon>50 kb inversion clade</taxon>
        <taxon>NPAAA clade</taxon>
        <taxon>Hologalegina</taxon>
        <taxon>IRL clade</taxon>
        <taxon>Trifolieae</taxon>
        <taxon>Melilotus</taxon>
    </lineage>
</organism>
<geneLocation type="chloroplast"/>
<reference key="1">
    <citation type="journal article" date="2000" name="Am. J. Bot.">
        <title>Phylogenetic systematics of the tribe Millettieae (Leguminosae) based on chloroplast trnK/matK sequences and its implications for evolutionary patterns in Papilionoideae.</title>
        <authorList>
            <person name="Hu J.-M."/>
            <person name="Lavin M."/>
            <person name="Wojciechowski M.F."/>
            <person name="Sanderson M.J."/>
        </authorList>
    </citation>
    <scope>NUCLEOTIDE SEQUENCE [GENOMIC DNA]</scope>
</reference>
<reference key="2">
    <citation type="book" date="2003" name="Advances in legume systematics - part 10">
        <title>Phylogenetic analyses of tribes Trifolieae and Vicieae based on sequences of the plastid gene matK (Papilionoideae: Leguminosae).</title>
        <editorList>
            <person name="Klitgaard B.B."/>
            <person name="Bruneau A."/>
        </editorList>
        <authorList>
            <person name="Steele K.P."/>
            <person name="Wojciechowski M.F."/>
        </authorList>
    </citation>
    <scope>NUCLEOTIDE SEQUENCE [GENOMIC DNA]</scope>
</reference>
<sequence length="506" mass="60670">MKEYQVYLERARSRQQDFLYPLIFREYIYGLAYSQNFNRSIFVENLGYDNKYSLLIVKRLITRMYQQNHLIISANDSNKNPFLGYNKNFYSQIISEGFAIVVEIPFFLELSSSLEEAEIIKSYKNLRSIHSIFPFLEDKLTHLNYVSDIRIPYPIHLEILVQILRYWVKDAPFFHLLRLFLYHFCNWNSFITTKKSISTFSKSNPRLFLFLYNFYVCEYESIFLFLRNKSSHLRLKSFSVFFERIFFYAKREHLVEVFAKDFSYTLTFFKDPLIHYVRYQGKCILASKNAPFLMNKWKHYFIHLWQGFFDVWSQPRTININQLSEHSFQLLGYFLNVRLNRSVVRSQMLQNTFLIEIVSKKLDIIVPIIPLIRSLAKAKFCNVLGHPISKPVWADSSDFDIIDRFLRICRNLSHYYNGSSKKKSLYQIKYILRLSCIKTLACKHKSTVRAFLKRSGSEELLEEFFTEEEEILSLIFPRDSSTLHRLNRNRIWYLDILFSNDLVNDE</sequence>
<comment type="function">
    <text evidence="1">Usually encoded in the trnK tRNA gene intron. Probably assists in splicing its own and other chloroplast group II introns.</text>
</comment>
<comment type="subcellular location">
    <subcellularLocation>
        <location>Plastid</location>
        <location>Chloroplast</location>
    </subcellularLocation>
</comment>
<comment type="similarity">
    <text evidence="1">Belongs to the intron maturase 2 family. MatK subfamily.</text>
</comment>
<accession>Q8MCP5</accession>
<accession>Q9TKN9</accession>